<keyword id="KW-0687">Ribonucleoprotein</keyword>
<keyword id="KW-0689">Ribosomal protein</keyword>
<keyword id="KW-0694">RNA-binding</keyword>
<keyword id="KW-0699">rRNA-binding</keyword>
<proteinExistence type="inferred from homology"/>
<protein>
    <recommendedName>
        <fullName evidence="1">Small ribosomal subunit protein uS19</fullName>
    </recommendedName>
    <alternativeName>
        <fullName evidence="2">30S ribosomal protein S19</fullName>
    </alternativeName>
</protein>
<feature type="chain" id="PRO_1000127958" description="Small ribosomal subunit protein uS19">
    <location>
        <begin position="1"/>
        <end position="91"/>
    </location>
</feature>
<comment type="function">
    <text evidence="1">Protein S19 forms a complex with S13 that binds strongly to the 16S ribosomal RNA.</text>
</comment>
<comment type="similarity">
    <text evidence="1">Belongs to the universal ribosomal protein uS19 family.</text>
</comment>
<accession>B3R7R9</accession>
<evidence type="ECO:0000255" key="1">
    <source>
        <dbReference type="HAMAP-Rule" id="MF_00531"/>
    </source>
</evidence>
<evidence type="ECO:0000305" key="2"/>
<gene>
    <name evidence="1" type="primary">rpsS</name>
    <name type="ordered locus">RALTA_A2940</name>
</gene>
<reference key="1">
    <citation type="journal article" date="2008" name="Genome Res.">
        <title>Genome sequence of the beta-rhizobium Cupriavidus taiwanensis and comparative genomics of rhizobia.</title>
        <authorList>
            <person name="Amadou C."/>
            <person name="Pascal G."/>
            <person name="Mangenot S."/>
            <person name="Glew M."/>
            <person name="Bontemps C."/>
            <person name="Capela D."/>
            <person name="Carrere S."/>
            <person name="Cruveiller S."/>
            <person name="Dossat C."/>
            <person name="Lajus A."/>
            <person name="Marchetti M."/>
            <person name="Poinsot V."/>
            <person name="Rouy Z."/>
            <person name="Servin B."/>
            <person name="Saad M."/>
            <person name="Schenowitz C."/>
            <person name="Barbe V."/>
            <person name="Batut J."/>
            <person name="Medigue C."/>
            <person name="Masson-Boivin C."/>
        </authorList>
    </citation>
    <scope>NUCLEOTIDE SEQUENCE [LARGE SCALE GENOMIC DNA]</scope>
    <source>
        <strain>DSM 17343 / BCRC 17206 / CCUG 44338 / CIP 107171 / LMG 19424 / R1</strain>
    </source>
</reference>
<organism>
    <name type="scientific">Cupriavidus taiwanensis (strain DSM 17343 / BCRC 17206 / CCUG 44338 / CIP 107171 / LMG 19424 / R1)</name>
    <name type="common">Ralstonia taiwanensis (strain LMG 19424)</name>
    <dbReference type="NCBI Taxonomy" id="977880"/>
    <lineage>
        <taxon>Bacteria</taxon>
        <taxon>Pseudomonadati</taxon>
        <taxon>Pseudomonadota</taxon>
        <taxon>Betaproteobacteria</taxon>
        <taxon>Burkholderiales</taxon>
        <taxon>Burkholderiaceae</taxon>
        <taxon>Cupriavidus</taxon>
    </lineage>
</organism>
<sequence>MTRSAKKGPFCDAHLLKKVEVATSGKDKKPIKTWSRRSTILPEFIGLTIAVHNGRQHVPVYVTENMVGHKLGEFAITRTFKGHAADKKAKR</sequence>
<dbReference type="EMBL" id="CU633749">
    <property type="protein sequence ID" value="CAQ70864.1"/>
    <property type="molecule type" value="Genomic_DNA"/>
</dbReference>
<dbReference type="RefSeq" id="WP_012354138.1">
    <property type="nucleotide sequence ID" value="NC_010528.1"/>
</dbReference>
<dbReference type="SMR" id="B3R7R9"/>
<dbReference type="GeneID" id="29762305"/>
<dbReference type="KEGG" id="cti:RALTA_A2940"/>
<dbReference type="eggNOG" id="COG0185">
    <property type="taxonomic scope" value="Bacteria"/>
</dbReference>
<dbReference type="HOGENOM" id="CLU_144911_0_1_4"/>
<dbReference type="BioCyc" id="CTAI977880:RALTA_RS14335-MONOMER"/>
<dbReference type="Proteomes" id="UP000001692">
    <property type="component" value="Chromosome 1"/>
</dbReference>
<dbReference type="GO" id="GO:0005737">
    <property type="term" value="C:cytoplasm"/>
    <property type="evidence" value="ECO:0007669"/>
    <property type="project" value="UniProtKB-ARBA"/>
</dbReference>
<dbReference type="GO" id="GO:0015935">
    <property type="term" value="C:small ribosomal subunit"/>
    <property type="evidence" value="ECO:0007669"/>
    <property type="project" value="InterPro"/>
</dbReference>
<dbReference type="GO" id="GO:0019843">
    <property type="term" value="F:rRNA binding"/>
    <property type="evidence" value="ECO:0007669"/>
    <property type="project" value="UniProtKB-UniRule"/>
</dbReference>
<dbReference type="GO" id="GO:0003735">
    <property type="term" value="F:structural constituent of ribosome"/>
    <property type="evidence" value="ECO:0007669"/>
    <property type="project" value="InterPro"/>
</dbReference>
<dbReference type="GO" id="GO:0000028">
    <property type="term" value="P:ribosomal small subunit assembly"/>
    <property type="evidence" value="ECO:0007669"/>
    <property type="project" value="TreeGrafter"/>
</dbReference>
<dbReference type="GO" id="GO:0006412">
    <property type="term" value="P:translation"/>
    <property type="evidence" value="ECO:0007669"/>
    <property type="project" value="UniProtKB-UniRule"/>
</dbReference>
<dbReference type="FunFam" id="3.30.860.10:FF:000001">
    <property type="entry name" value="30S ribosomal protein S19"/>
    <property type="match status" value="1"/>
</dbReference>
<dbReference type="Gene3D" id="3.30.860.10">
    <property type="entry name" value="30s Ribosomal Protein S19, Chain A"/>
    <property type="match status" value="1"/>
</dbReference>
<dbReference type="HAMAP" id="MF_00531">
    <property type="entry name" value="Ribosomal_uS19"/>
    <property type="match status" value="1"/>
</dbReference>
<dbReference type="InterPro" id="IPR002222">
    <property type="entry name" value="Ribosomal_uS19"/>
</dbReference>
<dbReference type="InterPro" id="IPR005732">
    <property type="entry name" value="Ribosomal_uS19_bac-type"/>
</dbReference>
<dbReference type="InterPro" id="IPR020934">
    <property type="entry name" value="Ribosomal_uS19_CS"/>
</dbReference>
<dbReference type="InterPro" id="IPR023575">
    <property type="entry name" value="Ribosomal_uS19_SF"/>
</dbReference>
<dbReference type="NCBIfam" id="TIGR01050">
    <property type="entry name" value="rpsS_bact"/>
    <property type="match status" value="1"/>
</dbReference>
<dbReference type="PANTHER" id="PTHR11880">
    <property type="entry name" value="RIBOSOMAL PROTEIN S19P FAMILY MEMBER"/>
    <property type="match status" value="1"/>
</dbReference>
<dbReference type="PANTHER" id="PTHR11880:SF8">
    <property type="entry name" value="SMALL RIBOSOMAL SUBUNIT PROTEIN US19M"/>
    <property type="match status" value="1"/>
</dbReference>
<dbReference type="Pfam" id="PF00203">
    <property type="entry name" value="Ribosomal_S19"/>
    <property type="match status" value="1"/>
</dbReference>
<dbReference type="PIRSF" id="PIRSF002144">
    <property type="entry name" value="Ribosomal_S19"/>
    <property type="match status" value="1"/>
</dbReference>
<dbReference type="PRINTS" id="PR00975">
    <property type="entry name" value="RIBOSOMALS19"/>
</dbReference>
<dbReference type="SUPFAM" id="SSF54570">
    <property type="entry name" value="Ribosomal protein S19"/>
    <property type="match status" value="1"/>
</dbReference>
<dbReference type="PROSITE" id="PS00323">
    <property type="entry name" value="RIBOSOMAL_S19"/>
    <property type="match status" value="1"/>
</dbReference>
<name>RS19_CUPTR</name>